<dbReference type="EMBL" id="AK007884">
    <property type="protein sequence ID" value="BAB25329.1"/>
    <property type="molecule type" value="mRNA"/>
</dbReference>
<dbReference type="EMBL" id="AK090082">
    <property type="protein sequence ID" value="BAC41084.1"/>
    <property type="molecule type" value="mRNA"/>
</dbReference>
<dbReference type="EMBL" id="AK166499">
    <property type="protein sequence ID" value="BAE38811.1"/>
    <property type="molecule type" value="mRNA"/>
</dbReference>
<dbReference type="EMBL" id="BC030165">
    <property type="protein sequence ID" value="AAH30165.1"/>
    <property type="molecule type" value="mRNA"/>
</dbReference>
<dbReference type="CCDS" id="CCDS28842.1"/>
<dbReference type="RefSeq" id="NP_079709.2">
    <property type="nucleotide sequence ID" value="NM_025433.3"/>
</dbReference>
<dbReference type="SMR" id="Q9D8M4"/>
<dbReference type="BioGRID" id="211311">
    <property type="interactions" value="2"/>
</dbReference>
<dbReference type="FunCoup" id="Q9D8M4">
    <property type="interactions" value="2675"/>
</dbReference>
<dbReference type="STRING" id="10090.ENSMUSP00000092888"/>
<dbReference type="iPTMnet" id="Q9D8M4"/>
<dbReference type="PhosphoSitePlus" id="Q9D8M4"/>
<dbReference type="PaxDb" id="10090-ENSMUSP00000092888"/>
<dbReference type="PeptideAtlas" id="Q9D8M4"/>
<dbReference type="ProteomicsDB" id="299926"/>
<dbReference type="Pumba" id="Q9D8M4"/>
<dbReference type="Antibodypedia" id="45922">
    <property type="antibodies" value="98 antibodies from 23 providers"/>
</dbReference>
<dbReference type="DNASU" id="66229"/>
<dbReference type="Ensembl" id="ENSMUST00000078286.6">
    <property type="protein sequence ID" value="ENSMUSP00000092888.5"/>
    <property type="gene ID" value="ENSMUSG00000063888.8"/>
</dbReference>
<dbReference type="Ensembl" id="ENSMUST00000233192.2">
    <property type="protein sequence ID" value="ENSMUSP00000156664.2"/>
    <property type="gene ID" value="ENSMUSG00000063888.8"/>
</dbReference>
<dbReference type="GeneID" id="66229"/>
<dbReference type="KEGG" id="mmu:66229"/>
<dbReference type="UCSC" id="uc008cuj.1">
    <property type="organism name" value="mouse"/>
</dbReference>
<dbReference type="AGR" id="MGI:1913479"/>
<dbReference type="CTD" id="285855"/>
<dbReference type="MGI" id="MGI:1913479">
    <property type="gene designation" value="Rpl7l1"/>
</dbReference>
<dbReference type="VEuPathDB" id="HostDB:ENSMUSG00000063888"/>
<dbReference type="eggNOG" id="KOG3184">
    <property type="taxonomic scope" value="Eukaryota"/>
</dbReference>
<dbReference type="GeneTree" id="ENSGT00950000182878"/>
<dbReference type="HOGENOM" id="CLU_055156_5_0_1"/>
<dbReference type="InParanoid" id="Q9D8M4"/>
<dbReference type="OMA" id="IEEHMGK"/>
<dbReference type="OrthoDB" id="28644at2759"/>
<dbReference type="PhylomeDB" id="Q9D8M4"/>
<dbReference type="TreeFam" id="TF300740"/>
<dbReference type="BioGRID-ORCS" id="66229">
    <property type="hits" value="28 hits in 81 CRISPR screens"/>
</dbReference>
<dbReference type="ChiTaRS" id="Rpl7l1">
    <property type="organism name" value="mouse"/>
</dbReference>
<dbReference type="PRO" id="PR:Q9D8M4"/>
<dbReference type="Proteomes" id="UP000000589">
    <property type="component" value="Chromosome 17"/>
</dbReference>
<dbReference type="RNAct" id="Q9D8M4">
    <property type="molecule type" value="protein"/>
</dbReference>
<dbReference type="Bgee" id="ENSMUSG00000063888">
    <property type="expression patterns" value="Expressed in internal carotid artery and 273 other cell types or tissues"/>
</dbReference>
<dbReference type="ExpressionAtlas" id="Q9D8M4">
    <property type="expression patterns" value="baseline and differential"/>
</dbReference>
<dbReference type="GO" id="GO:0005829">
    <property type="term" value="C:cytosol"/>
    <property type="evidence" value="ECO:0000304"/>
    <property type="project" value="Reactome"/>
</dbReference>
<dbReference type="GO" id="GO:0005730">
    <property type="term" value="C:nucleolus"/>
    <property type="evidence" value="ECO:0000314"/>
    <property type="project" value="MGI"/>
</dbReference>
<dbReference type="GO" id="GO:1990904">
    <property type="term" value="C:ribonucleoprotein complex"/>
    <property type="evidence" value="ECO:0007669"/>
    <property type="project" value="UniProtKB-KW"/>
</dbReference>
<dbReference type="GO" id="GO:0005840">
    <property type="term" value="C:ribosome"/>
    <property type="evidence" value="ECO:0007669"/>
    <property type="project" value="UniProtKB-KW"/>
</dbReference>
<dbReference type="GO" id="GO:0003723">
    <property type="term" value="F:RNA binding"/>
    <property type="evidence" value="ECO:0007669"/>
    <property type="project" value="InterPro"/>
</dbReference>
<dbReference type="GO" id="GO:0003735">
    <property type="term" value="F:structural constituent of ribosome"/>
    <property type="evidence" value="ECO:0007669"/>
    <property type="project" value="InterPro"/>
</dbReference>
<dbReference type="GO" id="GO:0001825">
    <property type="term" value="P:blastocyst formation"/>
    <property type="evidence" value="ECO:0000315"/>
    <property type="project" value="MGI"/>
</dbReference>
<dbReference type="GO" id="GO:0000463">
    <property type="term" value="P:maturation of LSU-rRNA from tricistronic rRNA transcript (SSU-rRNA, 5.8S rRNA, LSU-rRNA)"/>
    <property type="evidence" value="ECO:0007669"/>
    <property type="project" value="InterPro"/>
</dbReference>
<dbReference type="CDD" id="cd01657">
    <property type="entry name" value="Ribosomal_L7_archeal_euk"/>
    <property type="match status" value="1"/>
</dbReference>
<dbReference type="Gene3D" id="3.30.1390.20">
    <property type="entry name" value="Ribosomal protein L30, ferredoxin-like fold domain"/>
    <property type="match status" value="1"/>
</dbReference>
<dbReference type="InterPro" id="IPR036919">
    <property type="entry name" value="Ribo_uL30_ferredoxin-like_sf"/>
</dbReference>
<dbReference type="InterPro" id="IPR039699">
    <property type="entry name" value="Ribosomal_uL30"/>
</dbReference>
<dbReference type="InterPro" id="IPR018038">
    <property type="entry name" value="Ribosomal_uL30_CS"/>
</dbReference>
<dbReference type="InterPro" id="IPR005998">
    <property type="entry name" value="Ribosomal_uL30_euk"/>
</dbReference>
<dbReference type="InterPro" id="IPR035808">
    <property type="entry name" value="Ribosomal_uL30_euk_arc"/>
</dbReference>
<dbReference type="InterPro" id="IPR016082">
    <property type="entry name" value="Ribosomal_uL30_ferredoxin-like"/>
</dbReference>
<dbReference type="InterPro" id="IPR012988">
    <property type="entry name" value="Ribosomal_uL30_N_euk"/>
</dbReference>
<dbReference type="NCBIfam" id="TIGR01310">
    <property type="entry name" value="uL30_euk"/>
    <property type="match status" value="1"/>
</dbReference>
<dbReference type="PANTHER" id="PTHR11524">
    <property type="entry name" value="60S RIBOSOMAL PROTEIN L7"/>
    <property type="match status" value="1"/>
</dbReference>
<dbReference type="PANTHER" id="PTHR11524:SF13">
    <property type="entry name" value="RIBOSOMAL PROTEIN UL30-LIKE"/>
    <property type="match status" value="1"/>
</dbReference>
<dbReference type="Pfam" id="PF00327">
    <property type="entry name" value="Ribosomal_L30"/>
    <property type="match status" value="1"/>
</dbReference>
<dbReference type="Pfam" id="PF08079">
    <property type="entry name" value="Ribosomal_L30_N"/>
    <property type="match status" value="1"/>
</dbReference>
<dbReference type="SUPFAM" id="SSF55129">
    <property type="entry name" value="Ribosomal protein L30p/L7e"/>
    <property type="match status" value="1"/>
</dbReference>
<dbReference type="PROSITE" id="PS00634">
    <property type="entry name" value="RIBOSOMAL_L30"/>
    <property type="match status" value="1"/>
</dbReference>
<reference key="1">
    <citation type="journal article" date="2005" name="Science">
        <title>The transcriptional landscape of the mammalian genome.</title>
        <authorList>
            <person name="Carninci P."/>
            <person name="Kasukawa T."/>
            <person name="Katayama S."/>
            <person name="Gough J."/>
            <person name="Frith M.C."/>
            <person name="Maeda N."/>
            <person name="Oyama R."/>
            <person name="Ravasi T."/>
            <person name="Lenhard B."/>
            <person name="Wells C."/>
            <person name="Kodzius R."/>
            <person name="Shimokawa K."/>
            <person name="Bajic V.B."/>
            <person name="Brenner S.E."/>
            <person name="Batalov S."/>
            <person name="Forrest A.R."/>
            <person name="Zavolan M."/>
            <person name="Davis M.J."/>
            <person name="Wilming L.G."/>
            <person name="Aidinis V."/>
            <person name="Allen J.E."/>
            <person name="Ambesi-Impiombato A."/>
            <person name="Apweiler R."/>
            <person name="Aturaliya R.N."/>
            <person name="Bailey T.L."/>
            <person name="Bansal M."/>
            <person name="Baxter L."/>
            <person name="Beisel K.W."/>
            <person name="Bersano T."/>
            <person name="Bono H."/>
            <person name="Chalk A.M."/>
            <person name="Chiu K.P."/>
            <person name="Choudhary V."/>
            <person name="Christoffels A."/>
            <person name="Clutterbuck D.R."/>
            <person name="Crowe M.L."/>
            <person name="Dalla E."/>
            <person name="Dalrymple B.P."/>
            <person name="de Bono B."/>
            <person name="Della Gatta G."/>
            <person name="di Bernardo D."/>
            <person name="Down T."/>
            <person name="Engstrom P."/>
            <person name="Fagiolini M."/>
            <person name="Faulkner G."/>
            <person name="Fletcher C.F."/>
            <person name="Fukushima T."/>
            <person name="Furuno M."/>
            <person name="Futaki S."/>
            <person name="Gariboldi M."/>
            <person name="Georgii-Hemming P."/>
            <person name="Gingeras T.R."/>
            <person name="Gojobori T."/>
            <person name="Green R.E."/>
            <person name="Gustincich S."/>
            <person name="Harbers M."/>
            <person name="Hayashi Y."/>
            <person name="Hensch T.K."/>
            <person name="Hirokawa N."/>
            <person name="Hill D."/>
            <person name="Huminiecki L."/>
            <person name="Iacono M."/>
            <person name="Ikeo K."/>
            <person name="Iwama A."/>
            <person name="Ishikawa T."/>
            <person name="Jakt M."/>
            <person name="Kanapin A."/>
            <person name="Katoh M."/>
            <person name="Kawasawa Y."/>
            <person name="Kelso J."/>
            <person name="Kitamura H."/>
            <person name="Kitano H."/>
            <person name="Kollias G."/>
            <person name="Krishnan S.P."/>
            <person name="Kruger A."/>
            <person name="Kummerfeld S.K."/>
            <person name="Kurochkin I.V."/>
            <person name="Lareau L.F."/>
            <person name="Lazarevic D."/>
            <person name="Lipovich L."/>
            <person name="Liu J."/>
            <person name="Liuni S."/>
            <person name="McWilliam S."/>
            <person name="Madan Babu M."/>
            <person name="Madera M."/>
            <person name="Marchionni L."/>
            <person name="Matsuda H."/>
            <person name="Matsuzawa S."/>
            <person name="Miki H."/>
            <person name="Mignone F."/>
            <person name="Miyake S."/>
            <person name="Morris K."/>
            <person name="Mottagui-Tabar S."/>
            <person name="Mulder N."/>
            <person name="Nakano N."/>
            <person name="Nakauchi H."/>
            <person name="Ng P."/>
            <person name="Nilsson R."/>
            <person name="Nishiguchi S."/>
            <person name="Nishikawa S."/>
            <person name="Nori F."/>
            <person name="Ohara O."/>
            <person name="Okazaki Y."/>
            <person name="Orlando V."/>
            <person name="Pang K.C."/>
            <person name="Pavan W.J."/>
            <person name="Pavesi G."/>
            <person name="Pesole G."/>
            <person name="Petrovsky N."/>
            <person name="Piazza S."/>
            <person name="Reed J."/>
            <person name="Reid J.F."/>
            <person name="Ring B.Z."/>
            <person name="Ringwald M."/>
            <person name="Rost B."/>
            <person name="Ruan Y."/>
            <person name="Salzberg S.L."/>
            <person name="Sandelin A."/>
            <person name="Schneider C."/>
            <person name="Schoenbach C."/>
            <person name="Sekiguchi K."/>
            <person name="Semple C.A."/>
            <person name="Seno S."/>
            <person name="Sessa L."/>
            <person name="Sheng Y."/>
            <person name="Shibata Y."/>
            <person name="Shimada H."/>
            <person name="Shimada K."/>
            <person name="Silva D."/>
            <person name="Sinclair B."/>
            <person name="Sperling S."/>
            <person name="Stupka E."/>
            <person name="Sugiura K."/>
            <person name="Sultana R."/>
            <person name="Takenaka Y."/>
            <person name="Taki K."/>
            <person name="Tammoja K."/>
            <person name="Tan S.L."/>
            <person name="Tang S."/>
            <person name="Taylor M.S."/>
            <person name="Tegner J."/>
            <person name="Teichmann S.A."/>
            <person name="Ueda H.R."/>
            <person name="van Nimwegen E."/>
            <person name="Verardo R."/>
            <person name="Wei C.L."/>
            <person name="Yagi K."/>
            <person name="Yamanishi H."/>
            <person name="Zabarovsky E."/>
            <person name="Zhu S."/>
            <person name="Zimmer A."/>
            <person name="Hide W."/>
            <person name="Bult C."/>
            <person name="Grimmond S.M."/>
            <person name="Teasdale R.D."/>
            <person name="Liu E.T."/>
            <person name="Brusic V."/>
            <person name="Quackenbush J."/>
            <person name="Wahlestedt C."/>
            <person name="Mattick J.S."/>
            <person name="Hume D.A."/>
            <person name="Kai C."/>
            <person name="Sasaki D."/>
            <person name="Tomaru Y."/>
            <person name="Fukuda S."/>
            <person name="Kanamori-Katayama M."/>
            <person name="Suzuki M."/>
            <person name="Aoki J."/>
            <person name="Arakawa T."/>
            <person name="Iida J."/>
            <person name="Imamura K."/>
            <person name="Itoh M."/>
            <person name="Kato T."/>
            <person name="Kawaji H."/>
            <person name="Kawagashira N."/>
            <person name="Kawashima T."/>
            <person name="Kojima M."/>
            <person name="Kondo S."/>
            <person name="Konno H."/>
            <person name="Nakano K."/>
            <person name="Ninomiya N."/>
            <person name="Nishio T."/>
            <person name="Okada M."/>
            <person name="Plessy C."/>
            <person name="Shibata K."/>
            <person name="Shiraki T."/>
            <person name="Suzuki S."/>
            <person name="Tagami M."/>
            <person name="Waki K."/>
            <person name="Watahiki A."/>
            <person name="Okamura-Oho Y."/>
            <person name="Suzuki H."/>
            <person name="Kawai J."/>
            <person name="Hayashizaki Y."/>
        </authorList>
    </citation>
    <scope>NUCLEOTIDE SEQUENCE [LARGE SCALE MRNA]</scope>
    <source>
        <strain>C57BL/6J</strain>
        <tissue>Mammary gland</tissue>
        <tissue>Pancreas</tissue>
    </source>
</reference>
<reference key="2">
    <citation type="journal article" date="2004" name="Genome Res.">
        <title>The status, quality, and expansion of the NIH full-length cDNA project: the Mammalian Gene Collection (MGC).</title>
        <authorList>
            <consortium name="The MGC Project Team"/>
        </authorList>
    </citation>
    <scope>NUCLEOTIDE SEQUENCE [LARGE SCALE MRNA]</scope>
    <source>
        <strain>FVB/N</strain>
        <tissue>Mammary tumor</tissue>
    </source>
</reference>
<reference key="3">
    <citation type="journal article" date="2010" name="Cell">
        <title>A tissue-specific atlas of mouse protein phosphorylation and expression.</title>
        <authorList>
            <person name="Huttlin E.L."/>
            <person name="Jedrychowski M.P."/>
            <person name="Elias J.E."/>
            <person name="Goswami T."/>
            <person name="Rad R."/>
            <person name="Beausoleil S.A."/>
            <person name="Villen J."/>
            <person name="Haas W."/>
            <person name="Sowa M.E."/>
            <person name="Gygi S.P."/>
        </authorList>
    </citation>
    <scope>PHOSPHORYLATION [LARGE SCALE ANALYSIS] AT SER-54</scope>
    <scope>IDENTIFICATION BY MASS SPECTROMETRY [LARGE SCALE ANALYSIS]</scope>
    <source>
        <tissue>Spleen</tissue>
    </source>
</reference>
<accession>Q9D8M4</accession>
<name>RL7L_MOUSE</name>
<organism>
    <name type="scientific">Mus musculus</name>
    <name type="common">Mouse</name>
    <dbReference type="NCBI Taxonomy" id="10090"/>
    <lineage>
        <taxon>Eukaryota</taxon>
        <taxon>Metazoa</taxon>
        <taxon>Chordata</taxon>
        <taxon>Craniata</taxon>
        <taxon>Vertebrata</taxon>
        <taxon>Euteleostomi</taxon>
        <taxon>Mammalia</taxon>
        <taxon>Eutheria</taxon>
        <taxon>Euarchontoglires</taxon>
        <taxon>Glires</taxon>
        <taxon>Rodentia</taxon>
        <taxon>Myomorpha</taxon>
        <taxon>Muroidea</taxon>
        <taxon>Muridae</taxon>
        <taxon>Murinae</taxon>
        <taxon>Mus</taxon>
        <taxon>Mus</taxon>
    </lineage>
</organism>
<proteinExistence type="evidence at protein level"/>
<feature type="chain" id="PRO_0000346777" description="Large ribosomal subunit protein uL30-like 1">
    <location>
        <begin position="1"/>
        <end position="246"/>
    </location>
</feature>
<feature type="modified residue" description="Phosphoserine" evidence="2">
    <location>
        <position position="54"/>
    </location>
</feature>
<gene>
    <name type="primary">Rpl7l1</name>
</gene>
<comment type="similarity">
    <text evidence="1">Belongs to the universal ribosomal protein uL30 family.</text>
</comment>
<sequence>MAEEGERKKIPLVPENLLKKRKAYQALKATQAKQALLAKRERKGKQFRFRRLESFVHDSWRQQRDKVRVQRLEVKPRALEVPDKHPLAFVIRMERIEGVSLLVKSTIMKLGLKKLFSGVFVKVTPQSVRMLRTVEPYVTWGFPNLKSVRELILKRGQAKINNKTVPLTDNTVIEEHLGRFGVICLEDLIHEIAFPGKHFQEVSSFLCPFLLSVARHATRNRVGFRKEMGSPGYRGDRINQLIRQLN</sequence>
<evidence type="ECO:0000305" key="1"/>
<evidence type="ECO:0007744" key="2">
    <source>
    </source>
</evidence>
<protein>
    <recommendedName>
        <fullName evidence="1">Large ribosomal subunit protein uL30-like 1</fullName>
    </recommendedName>
    <alternativeName>
        <fullName>60S ribosomal protein L7-like 1</fullName>
    </alternativeName>
</protein>
<keyword id="KW-0597">Phosphoprotein</keyword>
<keyword id="KW-1185">Reference proteome</keyword>
<keyword id="KW-0687">Ribonucleoprotein</keyword>
<keyword id="KW-0689">Ribosomal protein</keyword>